<keyword id="KW-0414">Isoprene biosynthesis</keyword>
<keyword id="KW-0460">Magnesium</keyword>
<keyword id="KW-0479">Metal-binding</keyword>
<keyword id="KW-0784">Thiamine biosynthesis</keyword>
<keyword id="KW-0786">Thiamine pyrophosphate</keyword>
<keyword id="KW-0808">Transferase</keyword>
<name>DXS_SALA4</name>
<accession>B5EXG3</accession>
<feature type="chain" id="PRO_1000115764" description="1-deoxy-D-xylulose-5-phosphate synthase">
    <location>
        <begin position="1"/>
        <end position="620"/>
    </location>
</feature>
<feature type="binding site" evidence="1">
    <location>
        <position position="80"/>
    </location>
    <ligand>
        <name>thiamine diphosphate</name>
        <dbReference type="ChEBI" id="CHEBI:58937"/>
    </ligand>
</feature>
<feature type="binding site" evidence="1">
    <location>
        <begin position="121"/>
        <end position="123"/>
    </location>
    <ligand>
        <name>thiamine diphosphate</name>
        <dbReference type="ChEBI" id="CHEBI:58937"/>
    </ligand>
</feature>
<feature type="binding site" evidence="1">
    <location>
        <position position="152"/>
    </location>
    <ligand>
        <name>Mg(2+)</name>
        <dbReference type="ChEBI" id="CHEBI:18420"/>
    </ligand>
</feature>
<feature type="binding site" evidence="1">
    <location>
        <begin position="153"/>
        <end position="154"/>
    </location>
    <ligand>
        <name>thiamine diphosphate</name>
        <dbReference type="ChEBI" id="CHEBI:58937"/>
    </ligand>
</feature>
<feature type="binding site" evidence="1">
    <location>
        <position position="181"/>
    </location>
    <ligand>
        <name>Mg(2+)</name>
        <dbReference type="ChEBI" id="CHEBI:18420"/>
    </ligand>
</feature>
<feature type="binding site" evidence="1">
    <location>
        <position position="181"/>
    </location>
    <ligand>
        <name>thiamine diphosphate</name>
        <dbReference type="ChEBI" id="CHEBI:58937"/>
    </ligand>
</feature>
<feature type="binding site" evidence="1">
    <location>
        <position position="288"/>
    </location>
    <ligand>
        <name>thiamine diphosphate</name>
        <dbReference type="ChEBI" id="CHEBI:58937"/>
    </ligand>
</feature>
<feature type="binding site" evidence="1">
    <location>
        <position position="370"/>
    </location>
    <ligand>
        <name>thiamine diphosphate</name>
        <dbReference type="ChEBI" id="CHEBI:58937"/>
    </ligand>
</feature>
<organism>
    <name type="scientific">Salmonella agona (strain SL483)</name>
    <dbReference type="NCBI Taxonomy" id="454166"/>
    <lineage>
        <taxon>Bacteria</taxon>
        <taxon>Pseudomonadati</taxon>
        <taxon>Pseudomonadota</taxon>
        <taxon>Gammaproteobacteria</taxon>
        <taxon>Enterobacterales</taxon>
        <taxon>Enterobacteriaceae</taxon>
        <taxon>Salmonella</taxon>
    </lineage>
</organism>
<comment type="function">
    <text evidence="1">Catalyzes the acyloin condensation reaction between C atoms 2 and 3 of pyruvate and glyceraldehyde 3-phosphate to yield 1-deoxy-D-xylulose-5-phosphate (DXP).</text>
</comment>
<comment type="catalytic activity">
    <reaction evidence="1">
        <text>D-glyceraldehyde 3-phosphate + pyruvate + H(+) = 1-deoxy-D-xylulose 5-phosphate + CO2</text>
        <dbReference type="Rhea" id="RHEA:12605"/>
        <dbReference type="ChEBI" id="CHEBI:15361"/>
        <dbReference type="ChEBI" id="CHEBI:15378"/>
        <dbReference type="ChEBI" id="CHEBI:16526"/>
        <dbReference type="ChEBI" id="CHEBI:57792"/>
        <dbReference type="ChEBI" id="CHEBI:59776"/>
        <dbReference type="EC" id="2.2.1.7"/>
    </reaction>
</comment>
<comment type="cofactor">
    <cofactor evidence="1">
        <name>Mg(2+)</name>
        <dbReference type="ChEBI" id="CHEBI:18420"/>
    </cofactor>
    <text evidence="1">Binds 1 Mg(2+) ion per subunit.</text>
</comment>
<comment type="cofactor">
    <cofactor evidence="1">
        <name>thiamine diphosphate</name>
        <dbReference type="ChEBI" id="CHEBI:58937"/>
    </cofactor>
    <text evidence="1">Binds 1 thiamine pyrophosphate per subunit.</text>
</comment>
<comment type="pathway">
    <text evidence="1">Metabolic intermediate biosynthesis; 1-deoxy-D-xylulose 5-phosphate biosynthesis; 1-deoxy-D-xylulose 5-phosphate from D-glyceraldehyde 3-phosphate and pyruvate: step 1/1.</text>
</comment>
<comment type="subunit">
    <text evidence="1">Homodimer.</text>
</comment>
<comment type="similarity">
    <text evidence="1">Belongs to the transketolase family. DXPS subfamily.</text>
</comment>
<protein>
    <recommendedName>
        <fullName evidence="1">1-deoxy-D-xylulose-5-phosphate synthase</fullName>
        <ecNumber evidence="1">2.2.1.7</ecNumber>
    </recommendedName>
    <alternativeName>
        <fullName evidence="1">1-deoxyxylulose-5-phosphate synthase</fullName>
        <shortName evidence="1">DXP synthase</shortName>
        <shortName evidence="1">DXPS</shortName>
    </alternativeName>
</protein>
<sequence length="620" mass="67483">MSFDIAKYPTLALVDSTQELRLLPKESLPKLCDELRRYLLDSVSRSSGHFASGLGTVELTVALHYVYNTPFDQLIWDVGHQAYPHKILTGRRDKIGTIRQKGGLHPFPWRGESEYDVLSVGHSSTSISAGIGIAVAAEKEGKDRRTVCVIGDGAITAGMAFEAMNHAGDIRPDMLVILNDNEMSISENVGALNNHLAQLLSGKLYSSLREGGKKVFSGVPPIKELLKRTEEHIKGMVVPGTLFEELGFNYIGPVDGHDVMGLISTLKNMRDLKGPQFLHIMTKKGRGYEPAEKDPITFHAVPKFDPSSGCLPKSSGGLPGYSKIFGDWLCETAAKDSKLMAITPAMREGSGMVEFSRKFPDRYFDVAIAEQHAVTFAAGLAIGGYKPVVAIYSTFLQRAYDQVIHDVAIQKLPVMFAIDRAGIVGADGQTHQGAFDLSYLRCIPDMVIMTPSDENECRQMLFTGYHYNDGPTAVRYPRGNAQGVALTPLEKLPIGKGLVKRHGEKLAILNFGTLMPEAAKVAEALNATLVDMRFVKPLDDTLILEMAAQHDALVTLEENAIMGGAGSGVNEVLMAHRKPVPVLNIGLPDFFIPQGTQEEARAELGLDAAGIEAKIKAWQA</sequence>
<evidence type="ECO:0000255" key="1">
    <source>
        <dbReference type="HAMAP-Rule" id="MF_00315"/>
    </source>
</evidence>
<proteinExistence type="inferred from homology"/>
<gene>
    <name evidence="1" type="primary">dxs</name>
    <name type="ordered locus">SeAg_B0461</name>
</gene>
<reference key="1">
    <citation type="journal article" date="2011" name="J. Bacteriol.">
        <title>Comparative genomics of 28 Salmonella enterica isolates: evidence for CRISPR-mediated adaptive sublineage evolution.</title>
        <authorList>
            <person name="Fricke W.F."/>
            <person name="Mammel M.K."/>
            <person name="McDermott P.F."/>
            <person name="Tartera C."/>
            <person name="White D.G."/>
            <person name="Leclerc J.E."/>
            <person name="Ravel J."/>
            <person name="Cebula T.A."/>
        </authorList>
    </citation>
    <scope>NUCLEOTIDE SEQUENCE [LARGE SCALE GENOMIC DNA]</scope>
    <source>
        <strain>SL483</strain>
    </source>
</reference>
<dbReference type="EC" id="2.2.1.7" evidence="1"/>
<dbReference type="EMBL" id="CP001138">
    <property type="protein sequence ID" value="ACH50721.1"/>
    <property type="molecule type" value="Genomic_DNA"/>
</dbReference>
<dbReference type="RefSeq" id="WP_000006778.1">
    <property type="nucleotide sequence ID" value="NC_011149.1"/>
</dbReference>
<dbReference type="SMR" id="B5EXG3"/>
<dbReference type="KEGG" id="sea:SeAg_B0461"/>
<dbReference type="HOGENOM" id="CLU_009227_1_4_6"/>
<dbReference type="UniPathway" id="UPA00064">
    <property type="reaction ID" value="UER00091"/>
</dbReference>
<dbReference type="Proteomes" id="UP000008819">
    <property type="component" value="Chromosome"/>
</dbReference>
<dbReference type="GO" id="GO:0005829">
    <property type="term" value="C:cytosol"/>
    <property type="evidence" value="ECO:0007669"/>
    <property type="project" value="TreeGrafter"/>
</dbReference>
<dbReference type="GO" id="GO:0008661">
    <property type="term" value="F:1-deoxy-D-xylulose-5-phosphate synthase activity"/>
    <property type="evidence" value="ECO:0007669"/>
    <property type="project" value="UniProtKB-UniRule"/>
</dbReference>
<dbReference type="GO" id="GO:0000287">
    <property type="term" value="F:magnesium ion binding"/>
    <property type="evidence" value="ECO:0007669"/>
    <property type="project" value="UniProtKB-UniRule"/>
</dbReference>
<dbReference type="GO" id="GO:0030976">
    <property type="term" value="F:thiamine pyrophosphate binding"/>
    <property type="evidence" value="ECO:0007669"/>
    <property type="project" value="UniProtKB-UniRule"/>
</dbReference>
<dbReference type="GO" id="GO:0052865">
    <property type="term" value="P:1-deoxy-D-xylulose 5-phosphate biosynthetic process"/>
    <property type="evidence" value="ECO:0007669"/>
    <property type="project" value="UniProtKB-UniPathway"/>
</dbReference>
<dbReference type="GO" id="GO:0019288">
    <property type="term" value="P:isopentenyl diphosphate biosynthetic process, methylerythritol 4-phosphate pathway"/>
    <property type="evidence" value="ECO:0007669"/>
    <property type="project" value="TreeGrafter"/>
</dbReference>
<dbReference type="GO" id="GO:0016114">
    <property type="term" value="P:terpenoid biosynthetic process"/>
    <property type="evidence" value="ECO:0007669"/>
    <property type="project" value="UniProtKB-UniRule"/>
</dbReference>
<dbReference type="GO" id="GO:0009228">
    <property type="term" value="P:thiamine biosynthetic process"/>
    <property type="evidence" value="ECO:0007669"/>
    <property type="project" value="UniProtKB-UniRule"/>
</dbReference>
<dbReference type="CDD" id="cd02007">
    <property type="entry name" value="TPP_DXS"/>
    <property type="match status" value="1"/>
</dbReference>
<dbReference type="CDD" id="cd07033">
    <property type="entry name" value="TPP_PYR_DXS_TK_like"/>
    <property type="match status" value="1"/>
</dbReference>
<dbReference type="FunFam" id="3.40.50.920:FF:000002">
    <property type="entry name" value="1-deoxy-D-xylulose-5-phosphate synthase"/>
    <property type="match status" value="1"/>
</dbReference>
<dbReference type="FunFam" id="3.40.50.970:FF:000005">
    <property type="entry name" value="1-deoxy-D-xylulose-5-phosphate synthase"/>
    <property type="match status" value="1"/>
</dbReference>
<dbReference type="Gene3D" id="3.40.50.920">
    <property type="match status" value="1"/>
</dbReference>
<dbReference type="Gene3D" id="3.40.50.970">
    <property type="match status" value="2"/>
</dbReference>
<dbReference type="HAMAP" id="MF_00315">
    <property type="entry name" value="DXP_synth"/>
    <property type="match status" value="1"/>
</dbReference>
<dbReference type="InterPro" id="IPR005477">
    <property type="entry name" value="Dxylulose-5-P_synthase"/>
</dbReference>
<dbReference type="InterPro" id="IPR029061">
    <property type="entry name" value="THDP-binding"/>
</dbReference>
<dbReference type="InterPro" id="IPR009014">
    <property type="entry name" value="Transketo_C/PFOR_II"/>
</dbReference>
<dbReference type="InterPro" id="IPR005475">
    <property type="entry name" value="Transketolase-like_Pyr-bd"/>
</dbReference>
<dbReference type="InterPro" id="IPR020826">
    <property type="entry name" value="Transketolase_BS"/>
</dbReference>
<dbReference type="InterPro" id="IPR033248">
    <property type="entry name" value="Transketolase_C"/>
</dbReference>
<dbReference type="InterPro" id="IPR049557">
    <property type="entry name" value="Transketolase_CS"/>
</dbReference>
<dbReference type="NCBIfam" id="TIGR00204">
    <property type="entry name" value="dxs"/>
    <property type="match status" value="1"/>
</dbReference>
<dbReference type="NCBIfam" id="NF003933">
    <property type="entry name" value="PRK05444.2-2"/>
    <property type="match status" value="1"/>
</dbReference>
<dbReference type="PANTHER" id="PTHR43322">
    <property type="entry name" value="1-D-DEOXYXYLULOSE 5-PHOSPHATE SYNTHASE-RELATED"/>
    <property type="match status" value="1"/>
</dbReference>
<dbReference type="PANTHER" id="PTHR43322:SF5">
    <property type="entry name" value="1-DEOXY-D-XYLULOSE-5-PHOSPHATE SYNTHASE, CHLOROPLASTIC"/>
    <property type="match status" value="1"/>
</dbReference>
<dbReference type="Pfam" id="PF13292">
    <property type="entry name" value="DXP_synthase_N"/>
    <property type="match status" value="1"/>
</dbReference>
<dbReference type="Pfam" id="PF02779">
    <property type="entry name" value="Transket_pyr"/>
    <property type="match status" value="1"/>
</dbReference>
<dbReference type="Pfam" id="PF02780">
    <property type="entry name" value="Transketolase_C"/>
    <property type="match status" value="1"/>
</dbReference>
<dbReference type="SMART" id="SM00861">
    <property type="entry name" value="Transket_pyr"/>
    <property type="match status" value="1"/>
</dbReference>
<dbReference type="SUPFAM" id="SSF52518">
    <property type="entry name" value="Thiamin diphosphate-binding fold (THDP-binding)"/>
    <property type="match status" value="2"/>
</dbReference>
<dbReference type="SUPFAM" id="SSF52922">
    <property type="entry name" value="TK C-terminal domain-like"/>
    <property type="match status" value="1"/>
</dbReference>
<dbReference type="PROSITE" id="PS00801">
    <property type="entry name" value="TRANSKETOLASE_1"/>
    <property type="match status" value="1"/>
</dbReference>
<dbReference type="PROSITE" id="PS00802">
    <property type="entry name" value="TRANSKETOLASE_2"/>
    <property type="match status" value="1"/>
</dbReference>